<accession>Q07DZ0</accession>
<evidence type="ECO:0000250" key="1"/>
<evidence type="ECO:0000250" key="2">
    <source>
        <dbReference type="UniProtKB" id="P47755"/>
    </source>
</evidence>
<evidence type="ECO:0000305" key="3"/>
<proteinExistence type="inferred from homology"/>
<feature type="initiator methionine" description="Removed" evidence="2">
    <location>
        <position position="1"/>
    </location>
</feature>
<feature type="chain" id="PRO_0000260353" description="F-actin-capping protein subunit alpha-2">
    <location>
        <begin position="2"/>
        <end position="286"/>
    </location>
</feature>
<feature type="modified residue" description="N-acetylalanine" evidence="2">
    <location>
        <position position="2"/>
    </location>
</feature>
<feature type="modified residue" description="Phosphoserine" evidence="2">
    <location>
        <position position="9"/>
    </location>
</feature>
<reference key="1">
    <citation type="submission" date="2006-09" db="EMBL/GenBank/DDBJ databases">
        <title>NISC comparative sequencing initiative.</title>
        <authorList>
            <person name="Antonellis A."/>
            <person name="Ayele K."/>
            <person name="Benjamin B."/>
            <person name="Blakesley R.W."/>
            <person name="Boakye A."/>
            <person name="Bouffard G.G."/>
            <person name="Brinkley C."/>
            <person name="Brooks S."/>
            <person name="Chu G."/>
            <person name="Coleman H."/>
            <person name="Engle J."/>
            <person name="Gestole M."/>
            <person name="Greene A."/>
            <person name="Guan X."/>
            <person name="Gupta J."/>
            <person name="Haghighi P."/>
            <person name="Han J."/>
            <person name="Hansen N."/>
            <person name="Ho S.-L."/>
            <person name="Hu P."/>
            <person name="Hunter G."/>
            <person name="Hurle B."/>
            <person name="Idol J.R."/>
            <person name="Kwong P."/>
            <person name="Laric P."/>
            <person name="Larson S."/>
            <person name="Lee-Lin S.-Q."/>
            <person name="Legaspi R."/>
            <person name="Madden M."/>
            <person name="Maduro Q.L."/>
            <person name="Maduro V.B."/>
            <person name="Margulies E.H."/>
            <person name="Masiello C."/>
            <person name="Maskeri B."/>
            <person name="McDowell J."/>
            <person name="Mojidi H.A."/>
            <person name="Mullikin J.C."/>
            <person name="Oestreicher J.S."/>
            <person name="Park M."/>
            <person name="Portnoy M.E."/>
            <person name="Prasad A."/>
            <person name="Puri O."/>
            <person name="Reddix-Dugue N."/>
            <person name="Schandler K."/>
            <person name="Schueler M.G."/>
            <person name="Sison C."/>
            <person name="Stantripop S."/>
            <person name="Stephen E."/>
            <person name="Taye A."/>
            <person name="Thomas J.W."/>
            <person name="Thomas P.J."/>
            <person name="Tsipouri V."/>
            <person name="Ung L."/>
            <person name="Vogt J.L."/>
            <person name="Wetherby K.D."/>
            <person name="Young A."/>
            <person name="Green E.D."/>
        </authorList>
    </citation>
    <scope>NUCLEOTIDE SEQUENCE [LARGE SCALE GENOMIC DNA]</scope>
</reference>
<gene>
    <name type="primary">CAPZA2</name>
</gene>
<protein>
    <recommendedName>
        <fullName>F-actin-capping protein subunit alpha-2</fullName>
    </recommendedName>
    <alternativeName>
        <fullName>CapZ alpha-2</fullName>
    </alternativeName>
</protein>
<organism>
    <name type="scientific">Colobus guereza</name>
    <name type="common">Mantled guereza</name>
    <name type="synonym">Eastern black-and-white colobus monkey</name>
    <dbReference type="NCBI Taxonomy" id="33548"/>
    <lineage>
        <taxon>Eukaryota</taxon>
        <taxon>Metazoa</taxon>
        <taxon>Chordata</taxon>
        <taxon>Craniata</taxon>
        <taxon>Vertebrata</taxon>
        <taxon>Euteleostomi</taxon>
        <taxon>Mammalia</taxon>
        <taxon>Eutheria</taxon>
        <taxon>Euarchontoglires</taxon>
        <taxon>Primates</taxon>
        <taxon>Haplorrhini</taxon>
        <taxon>Catarrhini</taxon>
        <taxon>Cercopithecidae</taxon>
        <taxon>Colobinae</taxon>
        <taxon>Colobus</taxon>
    </lineage>
</organism>
<sequence length="286" mass="32949">MADLEEQLSDEEKVRIAAKFIIHAPPGEFNEVFNDVRLLLNNDNLLREGAAHAFAQYNLDQFTPVKIEGYEDQVLITEHGDLGNGKFLDPKNRICFKFDHLRKEATDPRPCEVENAVESWRTSVETALRAYVKEHYPNGVCTVYGKKIDGQQTIIACIESHQFQAKNFWNGRWRSEWKFTITPSTTQVVGILKIQVHYYEDGNVQLVSHKDIQDSLTVSNEVQTAKEFIKIVEAAENEYQTAISENYQTMSDTTFKALRRQLPVTRTKIDWNKILSYKIGKEMQNA</sequence>
<dbReference type="EMBL" id="DP000193">
    <property type="protein sequence ID" value="ABJ08852.1"/>
    <property type="molecule type" value="Genomic_DNA"/>
</dbReference>
<dbReference type="SMR" id="Q07DZ0"/>
<dbReference type="GO" id="GO:0030863">
    <property type="term" value="C:cortical cytoskeleton"/>
    <property type="evidence" value="ECO:0007669"/>
    <property type="project" value="TreeGrafter"/>
</dbReference>
<dbReference type="GO" id="GO:0008290">
    <property type="term" value="C:F-actin capping protein complex"/>
    <property type="evidence" value="ECO:0007669"/>
    <property type="project" value="InterPro"/>
</dbReference>
<dbReference type="GO" id="GO:0051015">
    <property type="term" value="F:actin filament binding"/>
    <property type="evidence" value="ECO:0007669"/>
    <property type="project" value="TreeGrafter"/>
</dbReference>
<dbReference type="GO" id="GO:0030036">
    <property type="term" value="P:actin cytoskeleton organization"/>
    <property type="evidence" value="ECO:0007669"/>
    <property type="project" value="TreeGrafter"/>
</dbReference>
<dbReference type="GO" id="GO:0051016">
    <property type="term" value="P:barbed-end actin filament capping"/>
    <property type="evidence" value="ECO:0007669"/>
    <property type="project" value="InterPro"/>
</dbReference>
<dbReference type="FunFam" id="3.30.1140.60:FF:000001">
    <property type="entry name" value="F-actin-capping protein subunit alpha"/>
    <property type="match status" value="1"/>
</dbReference>
<dbReference type="FunFam" id="3.90.1150.210:FF:000002">
    <property type="entry name" value="F-actin-capping protein subunit alpha"/>
    <property type="match status" value="1"/>
</dbReference>
<dbReference type="Gene3D" id="3.30.1140.60">
    <property type="entry name" value="F-actin capping protein, alpha subunit"/>
    <property type="match status" value="1"/>
</dbReference>
<dbReference type="Gene3D" id="3.90.1150.210">
    <property type="entry name" value="F-actin capping protein, beta subunit"/>
    <property type="match status" value="1"/>
</dbReference>
<dbReference type="InterPro" id="IPR002189">
    <property type="entry name" value="CapZ_alpha"/>
</dbReference>
<dbReference type="InterPro" id="IPR037282">
    <property type="entry name" value="CapZ_alpha/beta"/>
</dbReference>
<dbReference type="InterPro" id="IPR042276">
    <property type="entry name" value="CapZ_alpha/beta_2"/>
</dbReference>
<dbReference type="InterPro" id="IPR042489">
    <property type="entry name" value="CapZ_alpha_1"/>
</dbReference>
<dbReference type="InterPro" id="IPR017865">
    <property type="entry name" value="F-actin_cap_asu_CS"/>
</dbReference>
<dbReference type="PANTHER" id="PTHR10653">
    <property type="entry name" value="F-ACTIN-CAPPING PROTEIN SUBUNIT ALPHA"/>
    <property type="match status" value="1"/>
</dbReference>
<dbReference type="PANTHER" id="PTHR10653:SF2">
    <property type="entry name" value="F-ACTIN-CAPPING PROTEIN SUBUNIT ALPHA-2"/>
    <property type="match status" value="1"/>
</dbReference>
<dbReference type="Pfam" id="PF01267">
    <property type="entry name" value="F-actin_cap_A"/>
    <property type="match status" value="1"/>
</dbReference>
<dbReference type="PRINTS" id="PR00191">
    <property type="entry name" value="FACTINCAPA"/>
</dbReference>
<dbReference type="SUPFAM" id="SSF90096">
    <property type="entry name" value="Subunits of heterodimeric actin filament capping protein Capz"/>
    <property type="match status" value="1"/>
</dbReference>
<dbReference type="PROSITE" id="PS00748">
    <property type="entry name" value="F_ACTIN_CAPPING_A_1"/>
    <property type="match status" value="1"/>
</dbReference>
<dbReference type="PROSITE" id="PS00749">
    <property type="entry name" value="F_ACTIN_CAPPING_A_2"/>
    <property type="match status" value="1"/>
</dbReference>
<keyword id="KW-0007">Acetylation</keyword>
<keyword id="KW-0117">Actin capping</keyword>
<keyword id="KW-0009">Actin-binding</keyword>
<keyword id="KW-0597">Phosphoprotein</keyword>
<name>CAZA2_COLGU</name>
<comment type="function">
    <text evidence="1">F-actin-capping proteins bind in a Ca(2+)-independent manner to the fast growing ends of actin filaments (barbed end) thereby blocking the exchange of subunits at these ends. Unlike other capping proteins (such as gelsolin and severin), these proteins do not sever actin filaments (By similarity).</text>
</comment>
<comment type="subunit">
    <text evidence="1 2">Component of the F-actin capping complex, composed of a heterodimer of an alpha and a beta subunit. Component of the WASH complex, composed of F-actin-capping protein subunit alpha (CAPZA1, CAPZA2 or CAPZA3), F-actin-capping protein subunit beta (CAPZB), WASHC1, WASHC2, WASHC3, WASHC4 and WASHC5. Interacts with RCSD1/CAPZIP (By similarity). Directly interacts with CRACD; this interaction decreases binding to actin (By similarity).</text>
</comment>
<comment type="similarity">
    <text evidence="3">Belongs to the F-actin-capping protein alpha subunit family.</text>
</comment>